<comment type="function">
    <text evidence="1">Essential regulatory subunit of the mitochondrial calcium uniporter (mcu) channel, a protein that mediates calcium uptake into mitochondria.</text>
</comment>
<comment type="subcellular location">
    <subcellularLocation>
        <location evidence="1">Mitochondrion inner membrane</location>
        <topology evidence="1">Single-pass membrane protein</topology>
    </subcellularLocation>
</comment>
<comment type="similarity">
    <text evidence="3">Belongs to the SMDT1/EMRE family.</text>
</comment>
<dbReference type="EMBL" id="CH477283">
    <property type="protein sequence ID" value="EAT44843.1"/>
    <property type="molecule type" value="Genomic_DNA"/>
</dbReference>
<dbReference type="RefSeq" id="XP_001657299.1">
    <property type="nucleotide sequence ID" value="XM_001657249.1"/>
</dbReference>
<dbReference type="SMR" id="Q17ED3"/>
<dbReference type="FunCoup" id="Q17ED3">
    <property type="interactions" value="186"/>
</dbReference>
<dbReference type="STRING" id="7159.Q17ED3"/>
<dbReference type="PaxDb" id="7159-AAEL003858-PA"/>
<dbReference type="EnsemblMetazoa" id="AAEL003858-RA">
    <property type="protein sequence ID" value="AAEL003858-PA"/>
    <property type="gene ID" value="AAEL003858"/>
</dbReference>
<dbReference type="VEuPathDB" id="VectorBase:AAEL003858"/>
<dbReference type="eggNOG" id="KOG4542">
    <property type="taxonomic scope" value="Eukaryota"/>
</dbReference>
<dbReference type="HOGENOM" id="CLU_172921_0_1_1"/>
<dbReference type="InParanoid" id="Q17ED3"/>
<dbReference type="OMA" id="MGTQISK"/>
<dbReference type="OrthoDB" id="10039145at2759"/>
<dbReference type="PhylomeDB" id="Q17ED3"/>
<dbReference type="Proteomes" id="UP000008820">
    <property type="component" value="Chromosome 3"/>
</dbReference>
<dbReference type="Proteomes" id="UP000682892">
    <property type="component" value="Unassembled WGS sequence"/>
</dbReference>
<dbReference type="GO" id="GO:1990246">
    <property type="term" value="C:uniplex complex"/>
    <property type="evidence" value="ECO:0007669"/>
    <property type="project" value="InterPro"/>
</dbReference>
<dbReference type="GO" id="GO:0036444">
    <property type="term" value="P:calcium import into the mitochondrion"/>
    <property type="evidence" value="ECO:0007669"/>
    <property type="project" value="InterPro"/>
</dbReference>
<dbReference type="GO" id="GO:0051560">
    <property type="term" value="P:mitochondrial calcium ion homeostasis"/>
    <property type="evidence" value="ECO:0007669"/>
    <property type="project" value="InterPro"/>
</dbReference>
<dbReference type="InterPro" id="IPR018782">
    <property type="entry name" value="MCU_reg"/>
</dbReference>
<dbReference type="PANTHER" id="PTHR33904">
    <property type="entry name" value="ESSENTIAL MCU REGULATOR, MITOCHONDRIAL"/>
    <property type="match status" value="1"/>
</dbReference>
<dbReference type="PANTHER" id="PTHR33904:SF1">
    <property type="entry name" value="ESSENTIAL MCU REGULATOR, MITOCHONDRIAL"/>
    <property type="match status" value="1"/>
</dbReference>
<dbReference type="Pfam" id="PF10161">
    <property type="entry name" value="DDDD"/>
    <property type="match status" value="1"/>
</dbReference>
<reference evidence="4" key="1">
    <citation type="journal article" date="2007" name="Science">
        <title>Genome sequence of Aedes aegypti, a major arbovirus vector.</title>
        <authorList>
            <person name="Nene V."/>
            <person name="Wortman J.R."/>
            <person name="Lawson D."/>
            <person name="Haas B.J."/>
            <person name="Kodira C.D."/>
            <person name="Tu Z.J."/>
            <person name="Loftus B.J."/>
            <person name="Xi Z."/>
            <person name="Megy K."/>
            <person name="Grabherr M."/>
            <person name="Ren Q."/>
            <person name="Zdobnov E.M."/>
            <person name="Lobo N.F."/>
            <person name="Campbell K.S."/>
            <person name="Brown S.E."/>
            <person name="Bonaldo M.F."/>
            <person name="Zhu J."/>
            <person name="Sinkins S.P."/>
            <person name="Hogenkamp D.G."/>
            <person name="Amedeo P."/>
            <person name="Arensburger P."/>
            <person name="Atkinson P.W."/>
            <person name="Bidwell S.L."/>
            <person name="Biedler J."/>
            <person name="Birney E."/>
            <person name="Bruggner R.V."/>
            <person name="Costas J."/>
            <person name="Coy M.R."/>
            <person name="Crabtree J."/>
            <person name="Crawford M."/>
            <person name="DeBruyn B."/>
            <person name="DeCaprio D."/>
            <person name="Eiglmeier K."/>
            <person name="Eisenstadt E."/>
            <person name="El-Dorry H."/>
            <person name="Gelbart W.M."/>
            <person name="Gomes S.L."/>
            <person name="Hammond M."/>
            <person name="Hannick L.I."/>
            <person name="Hogan J.R."/>
            <person name="Holmes M.H."/>
            <person name="Jaffe D."/>
            <person name="Johnston S.J."/>
            <person name="Kennedy R.C."/>
            <person name="Koo H."/>
            <person name="Kravitz S."/>
            <person name="Kriventseva E.V."/>
            <person name="Kulp D."/>
            <person name="Labutti K."/>
            <person name="Lee E."/>
            <person name="Li S."/>
            <person name="Lovin D.D."/>
            <person name="Mao C."/>
            <person name="Mauceli E."/>
            <person name="Menck C.F."/>
            <person name="Miller J.R."/>
            <person name="Montgomery P."/>
            <person name="Mori A."/>
            <person name="Nascimento A.L."/>
            <person name="Naveira H.F."/>
            <person name="Nusbaum C."/>
            <person name="O'Leary S.B."/>
            <person name="Orvis J."/>
            <person name="Pertea M."/>
            <person name="Quesneville H."/>
            <person name="Reidenbach K.R."/>
            <person name="Rogers Y.-H.C."/>
            <person name="Roth C.W."/>
            <person name="Schneider J.R."/>
            <person name="Schatz M."/>
            <person name="Shumway M."/>
            <person name="Stanke M."/>
            <person name="Stinson E.O."/>
            <person name="Tubio J.M.C."/>
            <person name="Vanzee J.P."/>
            <person name="Verjovski-Almeida S."/>
            <person name="Werner D."/>
            <person name="White O.R."/>
            <person name="Wyder S."/>
            <person name="Zeng Q."/>
            <person name="Zhao Q."/>
            <person name="Zhao Y."/>
            <person name="Hill C.A."/>
            <person name="Raikhel A.S."/>
            <person name="Soares M.B."/>
            <person name="Knudson D.L."/>
            <person name="Lee N.H."/>
            <person name="Galagan J."/>
            <person name="Salzberg S.L."/>
            <person name="Paulsen I.T."/>
            <person name="Dimopoulos G."/>
            <person name="Collins F.H."/>
            <person name="Bruce B."/>
            <person name="Fraser-Liggett C.M."/>
            <person name="Severson D.W."/>
        </authorList>
    </citation>
    <scope>NUCLEOTIDE SEQUENCE [LARGE SCALE GENOMIC DNA]</scope>
    <source>
        <strain>LVPib12</strain>
    </source>
</reference>
<name>EMRE_AEDAE</name>
<gene>
    <name type="ORF">AAEL003858</name>
</gene>
<accession>Q17ED3</accession>
<sequence length="91" mass="9963">MVLSNVVRVVNRLNSAGTRSGLMGIRQLRRKYTYRSGALKPMPNVIPFGLLGVVLTVIPGLLIGATISKNMANFLEENDLFVPSDDDDDDD</sequence>
<feature type="transit peptide" description="Mitochondrion" evidence="2">
    <location>
        <begin position="1"/>
        <end status="unknown"/>
    </location>
</feature>
<feature type="chain" id="PRO_0000307347" description="Essential MCU regulator, mitochondrial">
    <location>
        <begin status="unknown"/>
        <end position="91"/>
    </location>
</feature>
<feature type="transmembrane region" description="Helical" evidence="2">
    <location>
        <begin position="45"/>
        <end position="65"/>
    </location>
</feature>
<evidence type="ECO:0000250" key="1">
    <source>
        <dbReference type="UniProtKB" id="Q9H4I9"/>
    </source>
</evidence>
<evidence type="ECO:0000255" key="2"/>
<evidence type="ECO:0000305" key="3"/>
<evidence type="ECO:0000312" key="4">
    <source>
        <dbReference type="EMBL" id="EAT44843.1"/>
    </source>
</evidence>
<keyword id="KW-0106">Calcium</keyword>
<keyword id="KW-0109">Calcium transport</keyword>
<keyword id="KW-0406">Ion transport</keyword>
<keyword id="KW-0472">Membrane</keyword>
<keyword id="KW-0496">Mitochondrion</keyword>
<keyword id="KW-0999">Mitochondrion inner membrane</keyword>
<keyword id="KW-1185">Reference proteome</keyword>
<keyword id="KW-0809">Transit peptide</keyword>
<keyword id="KW-0812">Transmembrane</keyword>
<keyword id="KW-1133">Transmembrane helix</keyword>
<keyword id="KW-0813">Transport</keyword>
<protein>
    <recommendedName>
        <fullName evidence="1">Essential MCU regulator, mitochondrial</fullName>
    </recommendedName>
</protein>
<organism>
    <name type="scientific">Aedes aegypti</name>
    <name type="common">Yellowfever mosquito</name>
    <name type="synonym">Culex aegypti</name>
    <dbReference type="NCBI Taxonomy" id="7159"/>
    <lineage>
        <taxon>Eukaryota</taxon>
        <taxon>Metazoa</taxon>
        <taxon>Ecdysozoa</taxon>
        <taxon>Arthropoda</taxon>
        <taxon>Hexapoda</taxon>
        <taxon>Insecta</taxon>
        <taxon>Pterygota</taxon>
        <taxon>Neoptera</taxon>
        <taxon>Endopterygota</taxon>
        <taxon>Diptera</taxon>
        <taxon>Nematocera</taxon>
        <taxon>Culicoidea</taxon>
        <taxon>Culicidae</taxon>
        <taxon>Culicinae</taxon>
        <taxon>Aedini</taxon>
        <taxon>Aedes</taxon>
        <taxon>Stegomyia</taxon>
    </lineage>
</organism>
<proteinExistence type="inferred from homology"/>